<name>RL1_STAA3</name>
<keyword id="KW-0678">Repressor</keyword>
<keyword id="KW-0687">Ribonucleoprotein</keyword>
<keyword id="KW-0689">Ribosomal protein</keyword>
<keyword id="KW-0694">RNA-binding</keyword>
<keyword id="KW-0699">rRNA-binding</keyword>
<keyword id="KW-0810">Translation regulation</keyword>
<keyword id="KW-0820">tRNA-binding</keyword>
<accession>Q2FJA2</accession>
<sequence length="230" mass="24708">MAKKGKKYQEAASKVDRTQHYSVEEAIKLAKETSIANFDASVEVAFRLGIDTRKNDQQIRGAVVLPNGTGKSQSVLVFAKGDKIAEAEAAGADYVGEAEYVQKIQQGWFDFDVVVATPDMMGEVGKLGRVLGPKGLMPNPKTGTVTMDVKKAVEEIKAGKVEYRAEKAGIVHASIGKVSFTDEQLIENFNTLQDVLAKAKPSSAKGTYFKSVAVTTTMGPGVKIDTASFK</sequence>
<reference key="1">
    <citation type="journal article" date="2006" name="Lancet">
        <title>Complete genome sequence of USA300, an epidemic clone of community-acquired meticillin-resistant Staphylococcus aureus.</title>
        <authorList>
            <person name="Diep B.A."/>
            <person name="Gill S.R."/>
            <person name="Chang R.F."/>
            <person name="Phan T.H."/>
            <person name="Chen J.H."/>
            <person name="Davidson M.G."/>
            <person name="Lin F."/>
            <person name="Lin J."/>
            <person name="Carleton H.A."/>
            <person name="Mongodin E.F."/>
            <person name="Sensabaugh G.F."/>
            <person name="Perdreau-Remington F."/>
        </authorList>
    </citation>
    <scope>NUCLEOTIDE SEQUENCE [LARGE SCALE GENOMIC DNA]</scope>
    <source>
        <strain>USA300</strain>
    </source>
</reference>
<evidence type="ECO:0000255" key="1">
    <source>
        <dbReference type="HAMAP-Rule" id="MF_01318"/>
    </source>
</evidence>
<evidence type="ECO:0000305" key="2"/>
<gene>
    <name evidence="1" type="primary">rplA</name>
    <name type="ordered locus">SAUSA300_0523</name>
</gene>
<protein>
    <recommendedName>
        <fullName evidence="1">Large ribosomal subunit protein uL1</fullName>
    </recommendedName>
    <alternativeName>
        <fullName evidence="2">50S ribosomal protein L1</fullName>
    </alternativeName>
</protein>
<proteinExistence type="inferred from homology"/>
<feature type="chain" id="PRO_0000308112" description="Large ribosomal subunit protein uL1">
    <location>
        <begin position="1"/>
        <end position="230"/>
    </location>
</feature>
<organism>
    <name type="scientific">Staphylococcus aureus (strain USA300)</name>
    <dbReference type="NCBI Taxonomy" id="367830"/>
    <lineage>
        <taxon>Bacteria</taxon>
        <taxon>Bacillati</taxon>
        <taxon>Bacillota</taxon>
        <taxon>Bacilli</taxon>
        <taxon>Bacillales</taxon>
        <taxon>Staphylococcaceae</taxon>
        <taxon>Staphylococcus</taxon>
    </lineage>
</organism>
<dbReference type="EMBL" id="CP000255">
    <property type="protein sequence ID" value="ABD22783.1"/>
    <property type="molecule type" value="Genomic_DNA"/>
</dbReference>
<dbReference type="RefSeq" id="WP_001074619.1">
    <property type="nucleotide sequence ID" value="NZ_CP027476.1"/>
</dbReference>
<dbReference type="SMR" id="Q2FJA2"/>
<dbReference type="GeneID" id="98344872"/>
<dbReference type="KEGG" id="saa:SAUSA300_0523"/>
<dbReference type="HOGENOM" id="CLU_062853_0_0_9"/>
<dbReference type="OMA" id="EFRVDKH"/>
<dbReference type="Proteomes" id="UP000001939">
    <property type="component" value="Chromosome"/>
</dbReference>
<dbReference type="GO" id="GO:0015934">
    <property type="term" value="C:large ribosomal subunit"/>
    <property type="evidence" value="ECO:0007669"/>
    <property type="project" value="InterPro"/>
</dbReference>
<dbReference type="GO" id="GO:0019843">
    <property type="term" value="F:rRNA binding"/>
    <property type="evidence" value="ECO:0007669"/>
    <property type="project" value="UniProtKB-UniRule"/>
</dbReference>
<dbReference type="GO" id="GO:0003735">
    <property type="term" value="F:structural constituent of ribosome"/>
    <property type="evidence" value="ECO:0007669"/>
    <property type="project" value="InterPro"/>
</dbReference>
<dbReference type="GO" id="GO:0000049">
    <property type="term" value="F:tRNA binding"/>
    <property type="evidence" value="ECO:0007669"/>
    <property type="project" value="UniProtKB-KW"/>
</dbReference>
<dbReference type="GO" id="GO:0006417">
    <property type="term" value="P:regulation of translation"/>
    <property type="evidence" value="ECO:0007669"/>
    <property type="project" value="UniProtKB-KW"/>
</dbReference>
<dbReference type="GO" id="GO:0006412">
    <property type="term" value="P:translation"/>
    <property type="evidence" value="ECO:0007669"/>
    <property type="project" value="UniProtKB-UniRule"/>
</dbReference>
<dbReference type="CDD" id="cd00403">
    <property type="entry name" value="Ribosomal_L1"/>
    <property type="match status" value="1"/>
</dbReference>
<dbReference type="FunFam" id="3.40.50.790:FF:000001">
    <property type="entry name" value="50S ribosomal protein L1"/>
    <property type="match status" value="1"/>
</dbReference>
<dbReference type="Gene3D" id="3.30.190.20">
    <property type="match status" value="1"/>
</dbReference>
<dbReference type="Gene3D" id="3.40.50.790">
    <property type="match status" value="1"/>
</dbReference>
<dbReference type="HAMAP" id="MF_01318_B">
    <property type="entry name" value="Ribosomal_uL1_B"/>
    <property type="match status" value="1"/>
</dbReference>
<dbReference type="InterPro" id="IPR005878">
    <property type="entry name" value="Ribosom_uL1_bac-type"/>
</dbReference>
<dbReference type="InterPro" id="IPR002143">
    <property type="entry name" value="Ribosomal_uL1"/>
</dbReference>
<dbReference type="InterPro" id="IPR023674">
    <property type="entry name" value="Ribosomal_uL1-like"/>
</dbReference>
<dbReference type="InterPro" id="IPR028364">
    <property type="entry name" value="Ribosomal_uL1/biogenesis"/>
</dbReference>
<dbReference type="InterPro" id="IPR016095">
    <property type="entry name" value="Ribosomal_uL1_3-a/b-sand"/>
</dbReference>
<dbReference type="InterPro" id="IPR023673">
    <property type="entry name" value="Ribosomal_uL1_CS"/>
</dbReference>
<dbReference type="NCBIfam" id="TIGR01169">
    <property type="entry name" value="rplA_bact"/>
    <property type="match status" value="1"/>
</dbReference>
<dbReference type="PANTHER" id="PTHR36427">
    <property type="entry name" value="54S RIBOSOMAL PROTEIN L1, MITOCHONDRIAL"/>
    <property type="match status" value="1"/>
</dbReference>
<dbReference type="PANTHER" id="PTHR36427:SF3">
    <property type="entry name" value="LARGE RIBOSOMAL SUBUNIT PROTEIN UL1M"/>
    <property type="match status" value="1"/>
</dbReference>
<dbReference type="Pfam" id="PF00687">
    <property type="entry name" value="Ribosomal_L1"/>
    <property type="match status" value="1"/>
</dbReference>
<dbReference type="PIRSF" id="PIRSF002155">
    <property type="entry name" value="Ribosomal_L1"/>
    <property type="match status" value="1"/>
</dbReference>
<dbReference type="SUPFAM" id="SSF56808">
    <property type="entry name" value="Ribosomal protein L1"/>
    <property type="match status" value="1"/>
</dbReference>
<dbReference type="PROSITE" id="PS01199">
    <property type="entry name" value="RIBOSOMAL_L1"/>
    <property type="match status" value="1"/>
</dbReference>
<comment type="function">
    <text evidence="1">Binds directly to 23S rRNA. The L1 stalk is quite mobile in the ribosome, and is involved in E site tRNA release.</text>
</comment>
<comment type="function">
    <text evidence="1">Protein L1 is also a translational repressor protein, it controls the translation of the L11 operon by binding to its mRNA.</text>
</comment>
<comment type="subunit">
    <text evidence="1">Part of the 50S ribosomal subunit.</text>
</comment>
<comment type="similarity">
    <text evidence="1">Belongs to the universal ribosomal protein uL1 family.</text>
</comment>